<keyword id="KW-1185">Reference proteome</keyword>
<keyword id="KW-0810">Translation regulation</keyword>
<name>HPF_PSEPK</name>
<proteinExistence type="inferred from homology"/>
<accession>P0A147</accession>
<accession>P15592</accession>
<evidence type="ECO:0000250" key="1">
    <source>
        <dbReference type="UniProtKB" id="P0AFX0"/>
    </source>
</evidence>
<evidence type="ECO:0000305" key="2"/>
<feature type="chain" id="PRO_0000097422" description="Ribosome hibernation promoting factor">
    <location>
        <begin position="1"/>
        <end position="102"/>
    </location>
</feature>
<feature type="sequence conflict" description="In Ref. 1; CAA34495." evidence="2" ref="1">
    <original>K</original>
    <variation>T</variation>
    <location>
        <position position="49"/>
    </location>
</feature>
<sequence>MQVNISGQHVEVTQPLRDYVLEKLARVESHFDKITNVQVIMKVEKLQQKVEATLQIPGGEVVANAEHEDMYAAIDALADKLDRQLKKHKEKQQSLLQGAAAR</sequence>
<gene>
    <name type="primary">hpf</name>
    <name type="synonym">rpoX</name>
    <name type="ordered locus">PP_0951</name>
</gene>
<reference key="1">
    <citation type="journal article" date="1989" name="Nucleic Acids Res.">
        <title>Nucleotide and deduced amino acid sequence of the RpoN sigma-factor of Pseudomonas putida.</title>
        <authorList>
            <person name="Koehler T."/>
            <person name="Cayrol J.M."/>
            <person name="Ramos J.L."/>
            <person name="Harayama S."/>
        </authorList>
    </citation>
    <scope>NUCLEOTIDE SEQUENCE [GENOMIC DNA]</scope>
</reference>
<reference key="2">
    <citation type="journal article" date="2002" name="Environ. Microbiol.">
        <title>Complete genome sequence and comparative analysis of the metabolically versatile Pseudomonas putida KT2440.</title>
        <authorList>
            <person name="Nelson K.E."/>
            <person name="Weinel C."/>
            <person name="Paulsen I.T."/>
            <person name="Dodson R.J."/>
            <person name="Hilbert H."/>
            <person name="Martins dos Santos V.A.P."/>
            <person name="Fouts D.E."/>
            <person name="Gill S.R."/>
            <person name="Pop M."/>
            <person name="Holmes M."/>
            <person name="Brinkac L.M."/>
            <person name="Beanan M.J."/>
            <person name="DeBoy R.T."/>
            <person name="Daugherty S.C."/>
            <person name="Kolonay J.F."/>
            <person name="Madupu R."/>
            <person name="Nelson W.C."/>
            <person name="White O."/>
            <person name="Peterson J.D."/>
            <person name="Khouri H.M."/>
            <person name="Hance I."/>
            <person name="Chris Lee P."/>
            <person name="Holtzapple E.K."/>
            <person name="Scanlan D."/>
            <person name="Tran K."/>
            <person name="Moazzez A."/>
            <person name="Utterback T.R."/>
            <person name="Rizzo M."/>
            <person name="Lee K."/>
            <person name="Kosack D."/>
            <person name="Moestl D."/>
            <person name="Wedler H."/>
            <person name="Lauber J."/>
            <person name="Stjepandic D."/>
            <person name="Hoheisel J."/>
            <person name="Straetz M."/>
            <person name="Heim S."/>
            <person name="Kiewitz C."/>
            <person name="Eisen J.A."/>
            <person name="Timmis K.N."/>
            <person name="Duesterhoeft A."/>
            <person name="Tuemmler B."/>
            <person name="Fraser C.M."/>
        </authorList>
    </citation>
    <scope>NUCLEOTIDE SEQUENCE [LARGE SCALE GENOMIC DNA]</scope>
    <source>
        <strain>ATCC 47054 / DSM 6125 / CFBP 8728 / NCIMB 11950 / KT2440</strain>
    </source>
</reference>
<protein>
    <recommendedName>
        <fullName>Ribosome hibernation promoting factor</fullName>
        <shortName>HPF</shortName>
    </recommendedName>
    <alternativeName>
        <fullName>Hibernation factor HPF</fullName>
    </alternativeName>
</protein>
<dbReference type="EMBL" id="X16474">
    <property type="protein sequence ID" value="CAA34495.1"/>
    <property type="molecule type" value="Genomic_DNA"/>
</dbReference>
<dbReference type="EMBL" id="AE015451">
    <property type="protein sequence ID" value="AAN66576.1"/>
    <property type="molecule type" value="Genomic_DNA"/>
</dbReference>
<dbReference type="PIR" id="T01754">
    <property type="entry name" value="T01754"/>
</dbReference>
<dbReference type="RefSeq" id="NP_743112.1">
    <property type="nucleotide sequence ID" value="NC_002947.4"/>
</dbReference>
<dbReference type="RefSeq" id="WP_003255135.1">
    <property type="nucleotide sequence ID" value="NZ_CP169744.1"/>
</dbReference>
<dbReference type="SMR" id="P0A147"/>
<dbReference type="STRING" id="160488.PP_0951"/>
<dbReference type="PaxDb" id="160488-PP_0951"/>
<dbReference type="GeneID" id="97166467"/>
<dbReference type="KEGG" id="ppu:PP_0951"/>
<dbReference type="PATRIC" id="fig|160488.4.peg.1012"/>
<dbReference type="eggNOG" id="COG1544">
    <property type="taxonomic scope" value="Bacteria"/>
</dbReference>
<dbReference type="HOGENOM" id="CLU_071472_3_1_6"/>
<dbReference type="OrthoDB" id="9795980at2"/>
<dbReference type="PhylomeDB" id="P0A147"/>
<dbReference type="BioCyc" id="PPUT160488:G1G01-1025-MONOMER"/>
<dbReference type="Proteomes" id="UP000000556">
    <property type="component" value="Chromosome"/>
</dbReference>
<dbReference type="GO" id="GO:0022627">
    <property type="term" value="C:cytosolic small ribosomal subunit"/>
    <property type="evidence" value="ECO:0007669"/>
    <property type="project" value="TreeGrafter"/>
</dbReference>
<dbReference type="GO" id="GO:0043024">
    <property type="term" value="F:ribosomal small subunit binding"/>
    <property type="evidence" value="ECO:0007669"/>
    <property type="project" value="TreeGrafter"/>
</dbReference>
<dbReference type="GO" id="GO:0045900">
    <property type="term" value="P:negative regulation of translational elongation"/>
    <property type="evidence" value="ECO:0007669"/>
    <property type="project" value="TreeGrafter"/>
</dbReference>
<dbReference type="CDD" id="cd00552">
    <property type="entry name" value="RaiA"/>
    <property type="match status" value="1"/>
</dbReference>
<dbReference type="FunFam" id="3.30.160.100:FF:000001">
    <property type="entry name" value="Ribosome hibernation promoting factor"/>
    <property type="match status" value="1"/>
</dbReference>
<dbReference type="Gene3D" id="3.30.160.100">
    <property type="entry name" value="Ribosome hibernation promotion factor-like"/>
    <property type="match status" value="1"/>
</dbReference>
<dbReference type="InterPro" id="IPR050574">
    <property type="entry name" value="HPF/YfiA_ribosome-assoc"/>
</dbReference>
<dbReference type="InterPro" id="IPR036567">
    <property type="entry name" value="RHF-like"/>
</dbReference>
<dbReference type="InterPro" id="IPR003489">
    <property type="entry name" value="RHF/RaiA"/>
</dbReference>
<dbReference type="NCBIfam" id="TIGR00741">
    <property type="entry name" value="yfiA"/>
    <property type="match status" value="1"/>
</dbReference>
<dbReference type="PANTHER" id="PTHR33231">
    <property type="entry name" value="30S RIBOSOMAL PROTEIN"/>
    <property type="match status" value="1"/>
</dbReference>
<dbReference type="PANTHER" id="PTHR33231:SF1">
    <property type="entry name" value="30S RIBOSOMAL PROTEIN"/>
    <property type="match status" value="1"/>
</dbReference>
<dbReference type="Pfam" id="PF02482">
    <property type="entry name" value="Ribosomal_S30AE"/>
    <property type="match status" value="1"/>
</dbReference>
<dbReference type="SUPFAM" id="SSF69754">
    <property type="entry name" value="Ribosome binding protein Y (YfiA homologue)"/>
    <property type="match status" value="1"/>
</dbReference>
<comment type="function">
    <text evidence="1">During stationary phase, promotes and stabilizes dimerization of 70S ribosomes by the ribosome modulation factor (RMF), leading to the formation of inactive 100S ribosomes.</text>
</comment>
<comment type="subunit">
    <text evidence="1">Associates exclusively with 100S ribosomes, which are dimers of 70S ribosomes.</text>
</comment>
<comment type="similarity">
    <text evidence="2">Belongs to the HPF/YfiA ribosome-associated protein family. Short HPF subfamily.</text>
</comment>
<organism>
    <name type="scientific">Pseudomonas putida (strain ATCC 47054 / DSM 6125 / CFBP 8728 / NCIMB 11950 / KT2440)</name>
    <dbReference type="NCBI Taxonomy" id="160488"/>
    <lineage>
        <taxon>Bacteria</taxon>
        <taxon>Pseudomonadati</taxon>
        <taxon>Pseudomonadota</taxon>
        <taxon>Gammaproteobacteria</taxon>
        <taxon>Pseudomonadales</taxon>
        <taxon>Pseudomonadaceae</taxon>
        <taxon>Pseudomonas</taxon>
    </lineage>
</organism>